<gene>
    <name evidence="3" type="primary">SPH20</name>
    <name evidence="6" type="ordered locus">At4g24975</name>
    <name evidence="4" type="ORF">F6I7</name>
</gene>
<name>SPH20_ARATH</name>
<accession>Q3E9W6</accession>
<protein>
    <recommendedName>
        <fullName evidence="3">S-protein homolog 20</fullName>
    </recommendedName>
</protein>
<dbReference type="EMBL" id="AL049657">
    <property type="status" value="NOT_ANNOTATED_CDS"/>
    <property type="molecule type" value="Genomic_DNA"/>
</dbReference>
<dbReference type="EMBL" id="CP002687">
    <property type="protein sequence ID" value="AEE84987.1"/>
    <property type="molecule type" value="Genomic_DNA"/>
</dbReference>
<dbReference type="EMBL" id="BT030655">
    <property type="protein sequence ID" value="ABR46235.1"/>
    <property type="molecule type" value="mRNA"/>
</dbReference>
<dbReference type="RefSeq" id="NP_680739.1">
    <property type="nucleotide sequence ID" value="NM_148373.2"/>
</dbReference>
<dbReference type="SMR" id="Q3E9W6"/>
<dbReference type="GlyCosmos" id="Q3E9W6">
    <property type="glycosylation" value="1 site, No reported glycans"/>
</dbReference>
<dbReference type="GlyGen" id="Q3E9W6">
    <property type="glycosylation" value="1 site"/>
</dbReference>
<dbReference type="PaxDb" id="3702-AT4G24975.1"/>
<dbReference type="ProteomicsDB" id="245196"/>
<dbReference type="EnsemblPlants" id="AT4G24975.1">
    <property type="protein sequence ID" value="AT4G24975.1"/>
    <property type="gene ID" value="AT4G24975"/>
</dbReference>
<dbReference type="GeneID" id="828600"/>
<dbReference type="Gramene" id="AT4G24975.1">
    <property type="protein sequence ID" value="AT4G24975.1"/>
    <property type="gene ID" value="AT4G24975"/>
</dbReference>
<dbReference type="KEGG" id="ath:AT4G24975"/>
<dbReference type="Araport" id="AT4G24975"/>
<dbReference type="TAIR" id="AT4G24975"/>
<dbReference type="eggNOG" id="ENOG502SVTJ">
    <property type="taxonomic scope" value="Eukaryota"/>
</dbReference>
<dbReference type="HOGENOM" id="CLU_125658_0_1_1"/>
<dbReference type="InParanoid" id="Q3E9W6"/>
<dbReference type="OMA" id="CFPWNDQ"/>
<dbReference type="PhylomeDB" id="Q3E9W6"/>
<dbReference type="PRO" id="PR:Q3E9W6"/>
<dbReference type="Proteomes" id="UP000006548">
    <property type="component" value="Chromosome 4"/>
</dbReference>
<dbReference type="ExpressionAtlas" id="Q3E9W6">
    <property type="expression patterns" value="baseline"/>
</dbReference>
<dbReference type="GO" id="GO:0005576">
    <property type="term" value="C:extracellular region"/>
    <property type="evidence" value="ECO:0007669"/>
    <property type="project" value="UniProtKB-SubCell"/>
</dbReference>
<dbReference type="GO" id="GO:0060320">
    <property type="term" value="P:rejection of self pollen"/>
    <property type="evidence" value="ECO:0007669"/>
    <property type="project" value="UniProtKB-KW"/>
</dbReference>
<dbReference type="InterPro" id="IPR010264">
    <property type="entry name" value="Self-incomp_S1"/>
</dbReference>
<dbReference type="PANTHER" id="PTHR31232">
    <property type="match status" value="1"/>
</dbReference>
<dbReference type="PANTHER" id="PTHR31232:SF163">
    <property type="entry name" value="S-PROTEIN HOMOLOG 18-RELATED"/>
    <property type="match status" value="1"/>
</dbReference>
<dbReference type="Pfam" id="PF05938">
    <property type="entry name" value="Self-incomp_S1"/>
    <property type="match status" value="1"/>
</dbReference>
<evidence type="ECO:0000255" key="1"/>
<evidence type="ECO:0000255" key="2">
    <source>
        <dbReference type="PROSITE-ProRule" id="PRU00498"/>
    </source>
</evidence>
<evidence type="ECO:0000303" key="3">
    <source>
    </source>
</evidence>
<evidence type="ECO:0000305" key="4"/>
<evidence type="ECO:0000305" key="5">
    <source>
    </source>
</evidence>
<evidence type="ECO:0000312" key="6">
    <source>
        <dbReference type="Araport" id="AT4G24975"/>
    </source>
</evidence>
<reference key="1">
    <citation type="journal article" date="1999" name="Nature">
        <title>Sequence and analysis of chromosome 4 of the plant Arabidopsis thaliana.</title>
        <authorList>
            <person name="Mayer K.F.X."/>
            <person name="Schueller C."/>
            <person name="Wambutt R."/>
            <person name="Murphy G."/>
            <person name="Volckaert G."/>
            <person name="Pohl T."/>
            <person name="Duesterhoeft A."/>
            <person name="Stiekema W."/>
            <person name="Entian K.-D."/>
            <person name="Terryn N."/>
            <person name="Harris B."/>
            <person name="Ansorge W."/>
            <person name="Brandt P."/>
            <person name="Grivell L.A."/>
            <person name="Rieger M."/>
            <person name="Weichselgartner M."/>
            <person name="de Simone V."/>
            <person name="Obermaier B."/>
            <person name="Mache R."/>
            <person name="Mueller M."/>
            <person name="Kreis M."/>
            <person name="Delseny M."/>
            <person name="Puigdomenech P."/>
            <person name="Watson M."/>
            <person name="Schmidtheini T."/>
            <person name="Reichert B."/>
            <person name="Portetelle D."/>
            <person name="Perez-Alonso M."/>
            <person name="Boutry M."/>
            <person name="Bancroft I."/>
            <person name="Vos P."/>
            <person name="Hoheisel J."/>
            <person name="Zimmermann W."/>
            <person name="Wedler H."/>
            <person name="Ridley P."/>
            <person name="Langham S.-A."/>
            <person name="McCullagh B."/>
            <person name="Bilham L."/>
            <person name="Robben J."/>
            <person name="van der Schueren J."/>
            <person name="Grymonprez B."/>
            <person name="Chuang Y.-J."/>
            <person name="Vandenbussche F."/>
            <person name="Braeken M."/>
            <person name="Weltjens I."/>
            <person name="Voet M."/>
            <person name="Bastiaens I."/>
            <person name="Aert R."/>
            <person name="Defoor E."/>
            <person name="Weitzenegger T."/>
            <person name="Bothe G."/>
            <person name="Ramsperger U."/>
            <person name="Hilbert H."/>
            <person name="Braun M."/>
            <person name="Holzer E."/>
            <person name="Brandt A."/>
            <person name="Peters S."/>
            <person name="van Staveren M."/>
            <person name="Dirkse W."/>
            <person name="Mooijman P."/>
            <person name="Klein Lankhorst R."/>
            <person name="Rose M."/>
            <person name="Hauf J."/>
            <person name="Koetter P."/>
            <person name="Berneiser S."/>
            <person name="Hempel S."/>
            <person name="Feldpausch M."/>
            <person name="Lamberth S."/>
            <person name="Van den Daele H."/>
            <person name="De Keyser A."/>
            <person name="Buysshaert C."/>
            <person name="Gielen J."/>
            <person name="Villarroel R."/>
            <person name="De Clercq R."/>
            <person name="van Montagu M."/>
            <person name="Rogers J."/>
            <person name="Cronin A."/>
            <person name="Quail M.A."/>
            <person name="Bray-Allen S."/>
            <person name="Clark L."/>
            <person name="Doggett J."/>
            <person name="Hall S."/>
            <person name="Kay M."/>
            <person name="Lennard N."/>
            <person name="McLay K."/>
            <person name="Mayes R."/>
            <person name="Pettett A."/>
            <person name="Rajandream M.A."/>
            <person name="Lyne M."/>
            <person name="Benes V."/>
            <person name="Rechmann S."/>
            <person name="Borkova D."/>
            <person name="Bloecker H."/>
            <person name="Scharfe M."/>
            <person name="Grimm M."/>
            <person name="Loehnert T.-H."/>
            <person name="Dose S."/>
            <person name="de Haan M."/>
            <person name="Maarse A.C."/>
            <person name="Schaefer M."/>
            <person name="Mueller-Auer S."/>
            <person name="Gabel C."/>
            <person name="Fuchs M."/>
            <person name="Fartmann B."/>
            <person name="Granderath K."/>
            <person name="Dauner D."/>
            <person name="Herzl A."/>
            <person name="Neumann S."/>
            <person name="Argiriou A."/>
            <person name="Vitale D."/>
            <person name="Liguori R."/>
            <person name="Piravandi E."/>
            <person name="Massenet O."/>
            <person name="Quigley F."/>
            <person name="Clabauld G."/>
            <person name="Muendlein A."/>
            <person name="Felber R."/>
            <person name="Schnabl S."/>
            <person name="Hiller R."/>
            <person name="Schmidt W."/>
            <person name="Lecharny A."/>
            <person name="Aubourg S."/>
            <person name="Chefdor F."/>
            <person name="Cooke R."/>
            <person name="Berger C."/>
            <person name="Monfort A."/>
            <person name="Casacuberta E."/>
            <person name="Gibbons T."/>
            <person name="Weber N."/>
            <person name="Vandenbol M."/>
            <person name="Bargues M."/>
            <person name="Terol J."/>
            <person name="Torres A."/>
            <person name="Perez-Perez A."/>
            <person name="Purnelle B."/>
            <person name="Bent E."/>
            <person name="Johnson S."/>
            <person name="Tacon D."/>
            <person name="Jesse T."/>
            <person name="Heijnen L."/>
            <person name="Schwarz S."/>
            <person name="Scholler P."/>
            <person name="Heber S."/>
            <person name="Francs P."/>
            <person name="Bielke C."/>
            <person name="Frishman D."/>
            <person name="Haase D."/>
            <person name="Lemcke K."/>
            <person name="Mewes H.-W."/>
            <person name="Stocker S."/>
            <person name="Zaccaria P."/>
            <person name="Bevan M."/>
            <person name="Wilson R.K."/>
            <person name="de la Bastide M."/>
            <person name="Habermann K."/>
            <person name="Parnell L."/>
            <person name="Dedhia N."/>
            <person name="Gnoj L."/>
            <person name="Schutz K."/>
            <person name="Huang E."/>
            <person name="Spiegel L."/>
            <person name="Sekhon M."/>
            <person name="Murray J."/>
            <person name="Sheet P."/>
            <person name="Cordes M."/>
            <person name="Abu-Threideh J."/>
            <person name="Stoneking T."/>
            <person name="Kalicki J."/>
            <person name="Graves T."/>
            <person name="Harmon G."/>
            <person name="Edwards J."/>
            <person name="Latreille P."/>
            <person name="Courtney L."/>
            <person name="Cloud J."/>
            <person name="Abbott A."/>
            <person name="Scott K."/>
            <person name="Johnson D."/>
            <person name="Minx P."/>
            <person name="Bentley D."/>
            <person name="Fulton B."/>
            <person name="Miller N."/>
            <person name="Greco T."/>
            <person name="Kemp K."/>
            <person name="Kramer J."/>
            <person name="Fulton L."/>
            <person name="Mardis E."/>
            <person name="Dante M."/>
            <person name="Pepin K."/>
            <person name="Hillier L.W."/>
            <person name="Nelson J."/>
            <person name="Spieth J."/>
            <person name="Ryan E."/>
            <person name="Andrews S."/>
            <person name="Geisel C."/>
            <person name="Layman D."/>
            <person name="Du H."/>
            <person name="Ali J."/>
            <person name="Berghoff A."/>
            <person name="Jones K."/>
            <person name="Drone K."/>
            <person name="Cotton M."/>
            <person name="Joshu C."/>
            <person name="Antonoiu B."/>
            <person name="Zidanic M."/>
            <person name="Strong C."/>
            <person name="Sun H."/>
            <person name="Lamar B."/>
            <person name="Yordan C."/>
            <person name="Ma P."/>
            <person name="Zhong J."/>
            <person name="Preston R."/>
            <person name="Vil D."/>
            <person name="Shekher M."/>
            <person name="Matero A."/>
            <person name="Shah R."/>
            <person name="Swaby I.K."/>
            <person name="O'Shaughnessy A."/>
            <person name="Rodriguez M."/>
            <person name="Hoffman J."/>
            <person name="Till S."/>
            <person name="Granat S."/>
            <person name="Shohdy N."/>
            <person name="Hasegawa A."/>
            <person name="Hameed A."/>
            <person name="Lodhi M."/>
            <person name="Johnson A."/>
            <person name="Chen E."/>
            <person name="Marra M.A."/>
            <person name="Martienssen R."/>
            <person name="McCombie W.R."/>
        </authorList>
    </citation>
    <scope>NUCLEOTIDE SEQUENCE [LARGE SCALE GENOMIC DNA]</scope>
    <source>
        <strain>cv. Columbia</strain>
    </source>
</reference>
<reference key="2">
    <citation type="journal article" date="2017" name="Plant J.">
        <title>Araport11: a complete reannotation of the Arabidopsis thaliana reference genome.</title>
        <authorList>
            <person name="Cheng C.Y."/>
            <person name="Krishnakumar V."/>
            <person name="Chan A.P."/>
            <person name="Thibaud-Nissen F."/>
            <person name="Schobel S."/>
            <person name="Town C.D."/>
        </authorList>
    </citation>
    <scope>GENOME REANNOTATION</scope>
    <source>
        <strain>cv. Columbia</strain>
    </source>
</reference>
<reference key="3">
    <citation type="submission" date="2007-06" db="EMBL/GenBank/DDBJ databases">
        <title>Arabidopsis ORF clones.</title>
        <authorList>
            <person name="Bautista-Mercan V.R."/>
            <person name="Kim C.J."/>
            <person name="Chen H."/>
            <person name="Quan R."/>
            <person name="De Los Reyes C."/>
            <person name="Ecker J.R."/>
        </authorList>
    </citation>
    <scope>NUCLEOTIDE SEQUENCE [LARGE SCALE MRNA]</scope>
    <source>
        <strain>cv. Columbia</strain>
    </source>
</reference>
<reference key="4">
    <citation type="journal article" date="1999" name="Plant Mol. Biol.">
        <title>Analysis of Arabidopsis genome sequence reveals a large new gene family in plants.</title>
        <authorList>
            <person name="Ride J.P."/>
            <person name="Davies E.M."/>
            <person name="Franklin F.C.H."/>
            <person name="Marshall D.F."/>
        </authorList>
    </citation>
    <scope>GENE FAMILY</scope>
    <scope>NOMENCLATURE</scope>
    <source>
        <strain>cv. Columbia</strain>
    </source>
</reference>
<keyword id="KW-0325">Glycoprotein</keyword>
<keyword id="KW-1185">Reference proteome</keyword>
<keyword id="KW-0964">Secreted</keyword>
<keyword id="KW-0713">Self-incompatibility</keyword>
<keyword id="KW-0732">Signal</keyword>
<proteinExistence type="evidence at transcript level"/>
<organism>
    <name type="scientific">Arabidopsis thaliana</name>
    <name type="common">Mouse-ear cress</name>
    <dbReference type="NCBI Taxonomy" id="3702"/>
    <lineage>
        <taxon>Eukaryota</taxon>
        <taxon>Viridiplantae</taxon>
        <taxon>Streptophyta</taxon>
        <taxon>Embryophyta</taxon>
        <taxon>Tracheophyta</taxon>
        <taxon>Spermatophyta</taxon>
        <taxon>Magnoliopsida</taxon>
        <taxon>eudicotyledons</taxon>
        <taxon>Gunneridae</taxon>
        <taxon>Pentapetalae</taxon>
        <taxon>rosids</taxon>
        <taxon>malvids</taxon>
        <taxon>Brassicales</taxon>
        <taxon>Brassicaceae</taxon>
        <taxon>Camelineae</taxon>
        <taxon>Arabidopsis</taxon>
    </lineage>
</organism>
<feature type="signal peptide" evidence="1">
    <location>
        <begin position="1"/>
        <end position="26"/>
    </location>
</feature>
<feature type="chain" id="PRO_5009342700" description="S-protein homolog 20">
    <location>
        <begin position="27"/>
        <end position="135"/>
    </location>
</feature>
<feature type="glycosylation site" description="N-linked (GlcNAc...) asparagine" evidence="2">
    <location>
        <position position="88"/>
    </location>
</feature>
<comment type="subcellular location">
    <subcellularLocation>
        <location evidence="5">Secreted</location>
    </subcellularLocation>
</comment>
<comment type="similarity">
    <text evidence="4">Belongs to the plant self-incompatibility (S1) protein family.</text>
</comment>
<sequence>MNGSSAFHIILSVTFMVFLFGGLCEAGVVVNVDIINDIGPNVQLGLHCKSKDKDLGPQSLAPQQHWGFRKTLDFWGVTLFFCHFEWENQSKWFDILVAGRDRNTCAEHPCVWSIRPSGPCRLTGKEKCFPWNDQY</sequence>